<sequence length="217" mass="23118">MAGKEEIIAKAKDSITEFDEEMAQEAANEALVAGLDPVEIIEHGYTAGMQYVGDQFEQGTLFLPHVLAAAEAMKAGIEVLQPEMEKRKAKTTTLGTVIIGTIEGDIHSIGKDIVASMLNIAGFEVVDLGRDVAIKTFVEKAKELKPDIVATSALMTTTMVNQIQLEEQLKEAGIRGQVKTMVGGAPVTQGWADKIGADIYGESATDAVNKIKAAIKS</sequence>
<name>MTTC2_METAC</name>
<reference key="1">
    <citation type="journal article" date="2002" name="Genome Res.">
        <title>The genome of Methanosarcina acetivorans reveals extensive metabolic and physiological diversity.</title>
        <authorList>
            <person name="Galagan J.E."/>
            <person name="Nusbaum C."/>
            <person name="Roy A."/>
            <person name="Endrizzi M.G."/>
            <person name="Macdonald P."/>
            <person name="FitzHugh W."/>
            <person name="Calvo S."/>
            <person name="Engels R."/>
            <person name="Smirnov S."/>
            <person name="Atnoor D."/>
            <person name="Brown A."/>
            <person name="Allen N."/>
            <person name="Naylor J."/>
            <person name="Stange-Thomann N."/>
            <person name="DeArellano K."/>
            <person name="Johnson R."/>
            <person name="Linton L."/>
            <person name="McEwan P."/>
            <person name="McKernan K."/>
            <person name="Talamas J."/>
            <person name="Tirrell A."/>
            <person name="Ye W."/>
            <person name="Zimmer A."/>
            <person name="Barber R.D."/>
            <person name="Cann I."/>
            <person name="Graham D.E."/>
            <person name="Grahame D.A."/>
            <person name="Guss A.M."/>
            <person name="Hedderich R."/>
            <person name="Ingram-Smith C."/>
            <person name="Kuettner H.C."/>
            <person name="Krzycki J.A."/>
            <person name="Leigh J.A."/>
            <person name="Li W."/>
            <person name="Liu J."/>
            <person name="Mukhopadhyay B."/>
            <person name="Reeve J.N."/>
            <person name="Smith K."/>
            <person name="Springer T.A."/>
            <person name="Umayam L.A."/>
            <person name="White O."/>
            <person name="White R.H."/>
            <person name="de Macario E.C."/>
            <person name="Ferry J.G."/>
            <person name="Jarrell K.F."/>
            <person name="Jing H."/>
            <person name="Macario A.J.L."/>
            <person name="Paulsen I.T."/>
            <person name="Pritchett M."/>
            <person name="Sowers K.R."/>
            <person name="Swanson R.V."/>
            <person name="Zinder S.H."/>
            <person name="Lander E."/>
            <person name="Metcalf W.W."/>
            <person name="Birren B."/>
        </authorList>
    </citation>
    <scope>NUCLEOTIDE SEQUENCE [LARGE SCALE GENOMIC DNA]</scope>
    <source>
        <strain>ATCC 35395 / DSM 2834 / JCM 12185 / C2A</strain>
    </source>
</reference>
<dbReference type="EMBL" id="AE010299">
    <property type="protein sequence ID" value="AAM04364.1"/>
    <property type="molecule type" value="Genomic_DNA"/>
</dbReference>
<dbReference type="RefSeq" id="WP_011020969.1">
    <property type="nucleotide sequence ID" value="NC_003552.1"/>
</dbReference>
<dbReference type="SMR" id="Q8TS74"/>
<dbReference type="STRING" id="188937.MA_0931"/>
<dbReference type="EnsemblBacteria" id="AAM04364">
    <property type="protein sequence ID" value="AAM04364"/>
    <property type="gene ID" value="MA_0931"/>
</dbReference>
<dbReference type="GeneID" id="1472821"/>
<dbReference type="KEGG" id="mac:MA_0931"/>
<dbReference type="HOGENOM" id="CLU_082102_1_0_2"/>
<dbReference type="InParanoid" id="Q8TS74"/>
<dbReference type="OrthoDB" id="134276at2157"/>
<dbReference type="PhylomeDB" id="Q8TS74"/>
<dbReference type="UniPathway" id="UPA00645"/>
<dbReference type="Proteomes" id="UP000002487">
    <property type="component" value="Chromosome"/>
</dbReference>
<dbReference type="GO" id="GO:0031419">
    <property type="term" value="F:cobalamin binding"/>
    <property type="evidence" value="ECO:0007669"/>
    <property type="project" value="InterPro"/>
</dbReference>
<dbReference type="GO" id="GO:0050897">
    <property type="term" value="F:cobalt ion binding"/>
    <property type="evidence" value="ECO:0007669"/>
    <property type="project" value="InterPro"/>
</dbReference>
<dbReference type="GO" id="GO:0008168">
    <property type="term" value="F:methyltransferase activity"/>
    <property type="evidence" value="ECO:0007669"/>
    <property type="project" value="UniProtKB-ARBA"/>
</dbReference>
<dbReference type="GO" id="GO:0015948">
    <property type="term" value="P:methanogenesis"/>
    <property type="evidence" value="ECO:0007669"/>
    <property type="project" value="UniProtKB-KW"/>
</dbReference>
<dbReference type="CDD" id="cd02070">
    <property type="entry name" value="corrinoid_protein_B12-BD"/>
    <property type="match status" value="1"/>
</dbReference>
<dbReference type="FunFam" id="3.40.50.280:FF:000003">
    <property type="entry name" value="Dimethylamine methyltransferase corrinoid protein"/>
    <property type="match status" value="1"/>
</dbReference>
<dbReference type="FunFam" id="1.10.1240.10:FF:000004">
    <property type="entry name" value="Monomethylamine methyltransferase corrinoid protein"/>
    <property type="match status" value="1"/>
</dbReference>
<dbReference type="Gene3D" id="3.40.50.280">
    <property type="entry name" value="Cobalamin-binding domain"/>
    <property type="match status" value="1"/>
</dbReference>
<dbReference type="Gene3D" id="1.10.1240.10">
    <property type="entry name" value="Methionine synthase domain"/>
    <property type="match status" value="1"/>
</dbReference>
<dbReference type="InterPro" id="IPR003759">
    <property type="entry name" value="Cbl-bd_cap"/>
</dbReference>
<dbReference type="InterPro" id="IPR006158">
    <property type="entry name" value="Cobalamin-bd"/>
</dbReference>
<dbReference type="InterPro" id="IPR036724">
    <property type="entry name" value="Cobalamin-bd_sf"/>
</dbReference>
<dbReference type="InterPro" id="IPR012741">
    <property type="entry name" value="Corrinoid_p"/>
</dbReference>
<dbReference type="InterPro" id="IPR050554">
    <property type="entry name" value="Met_Synthase/Corrinoid"/>
</dbReference>
<dbReference type="InterPro" id="IPR036594">
    <property type="entry name" value="Meth_synthase_dom"/>
</dbReference>
<dbReference type="NCBIfam" id="TIGR02370">
    <property type="entry name" value="pyl_corrinoid"/>
    <property type="match status" value="1"/>
</dbReference>
<dbReference type="PANTHER" id="PTHR45833">
    <property type="entry name" value="METHIONINE SYNTHASE"/>
    <property type="match status" value="1"/>
</dbReference>
<dbReference type="PANTHER" id="PTHR45833:SF1">
    <property type="entry name" value="METHIONINE SYNTHASE"/>
    <property type="match status" value="1"/>
</dbReference>
<dbReference type="Pfam" id="PF02310">
    <property type="entry name" value="B12-binding"/>
    <property type="match status" value="1"/>
</dbReference>
<dbReference type="Pfam" id="PF02607">
    <property type="entry name" value="B12-binding_2"/>
    <property type="match status" value="1"/>
</dbReference>
<dbReference type="SMART" id="SM01018">
    <property type="entry name" value="B12-binding_2"/>
    <property type="match status" value="1"/>
</dbReference>
<dbReference type="SUPFAM" id="SSF52242">
    <property type="entry name" value="Cobalamin (vitamin B12)-binding domain"/>
    <property type="match status" value="1"/>
</dbReference>
<dbReference type="SUPFAM" id="SSF47644">
    <property type="entry name" value="Methionine synthase domain"/>
    <property type="match status" value="1"/>
</dbReference>
<dbReference type="PROSITE" id="PS51332">
    <property type="entry name" value="B12_BINDING"/>
    <property type="match status" value="1"/>
</dbReference>
<dbReference type="PROSITE" id="PS51337">
    <property type="entry name" value="B12_BINDING_NTER"/>
    <property type="match status" value="1"/>
</dbReference>
<comment type="function">
    <text evidence="1">Acts probably as a methyl group carrier between MttB and either MtbA or MtaA.</text>
</comment>
<comment type="pathway">
    <text>One-carbon metabolism; methanogenesis from trimethylamine.</text>
</comment>
<comment type="subunit">
    <text evidence="1">Can form a complex with MttB.</text>
</comment>
<comment type="similarity">
    <text evidence="4">Belongs to the methylamine corrinoid protein family.</text>
</comment>
<keyword id="KW-0170">Cobalt</keyword>
<keyword id="KW-0479">Metal-binding</keyword>
<keyword id="KW-0484">Methanogenesis</keyword>
<keyword id="KW-1185">Reference proteome</keyword>
<keyword id="KW-0677">Repeat</keyword>
<protein>
    <recommendedName>
        <fullName>Trimethylamine corrinoid protein 2</fullName>
        <shortName>TCP 2</shortName>
    </recommendedName>
</protein>
<evidence type="ECO:0000250" key="1"/>
<evidence type="ECO:0000255" key="2">
    <source>
        <dbReference type="PROSITE-ProRule" id="PRU00666"/>
    </source>
</evidence>
<evidence type="ECO:0000255" key="3">
    <source>
        <dbReference type="PROSITE-ProRule" id="PRU00667"/>
    </source>
</evidence>
<evidence type="ECO:0000305" key="4"/>
<organism>
    <name type="scientific">Methanosarcina acetivorans (strain ATCC 35395 / DSM 2834 / JCM 12185 / C2A)</name>
    <dbReference type="NCBI Taxonomy" id="188937"/>
    <lineage>
        <taxon>Archaea</taxon>
        <taxon>Methanobacteriati</taxon>
        <taxon>Methanobacteriota</taxon>
        <taxon>Stenosarchaea group</taxon>
        <taxon>Methanomicrobia</taxon>
        <taxon>Methanosarcinales</taxon>
        <taxon>Methanosarcinaceae</taxon>
        <taxon>Methanosarcina</taxon>
    </lineage>
</organism>
<proteinExistence type="inferred from homology"/>
<gene>
    <name type="primary">mttC2</name>
    <name type="ordered locus">MA_0931</name>
</gene>
<feature type="chain" id="PRO_0000216483" description="Trimethylamine corrinoid protein 2">
    <location>
        <begin position="1"/>
        <end position="217"/>
    </location>
</feature>
<feature type="domain" description="B12-binding N-terminal" evidence="3">
    <location>
        <begin position="1"/>
        <end position="92"/>
    </location>
</feature>
<feature type="domain" description="B12-binding" evidence="2">
    <location>
        <begin position="94"/>
        <end position="217"/>
    </location>
</feature>
<feature type="binding site" description="axial binding residue" evidence="1">
    <location>
        <position position="107"/>
    </location>
    <ligand>
        <name>methylcob(III)alamin</name>
        <dbReference type="ChEBI" id="CHEBI:28115"/>
    </ligand>
    <ligandPart>
        <name>Co</name>
        <dbReference type="ChEBI" id="CHEBI:27638"/>
    </ligandPart>
</feature>
<accession>Q8TS74</accession>